<reference key="1">
    <citation type="journal article" date="1992" name="Exp. Parasitol.">
        <title>Identification and characterization of a Giardia lamblia group-specific gene.</title>
        <authorList>
            <person name="Nash T.E."/>
            <person name="Mowatt M.R."/>
        </authorList>
    </citation>
    <scope>NUCLEOTIDE SEQUENCE [GENOMIC DNA]</scope>
</reference>
<sequence>MFNPRHPGGEFFGRKHHRRHAPDGRSSSSSSSSSECELGYDERRCCRQEPDAHCCDREHRKFWKHPPEFPHFGKCKGRHALPFPRMEHWPGPKHCPFLSEKDMKDLPVTVHHGCMPIVAHGVVMFHIVSETKPSITISNTGAIKVEANGIQLLSASLKEKYPVDKVVASYANKIATIRIPCDAAFSESPVDIPITIQK</sequence>
<feature type="chain" id="PRO_0000089244" description="Protein C4">
    <location>
        <begin position="1"/>
        <end position="198"/>
    </location>
</feature>
<feature type="region of interest" description="Disordered" evidence="1">
    <location>
        <begin position="1"/>
        <end position="36"/>
    </location>
</feature>
<evidence type="ECO:0000256" key="1">
    <source>
        <dbReference type="SAM" id="MobiDB-lite"/>
    </source>
</evidence>
<organism>
    <name type="scientific">Giardia intestinalis</name>
    <name type="common">Giardia lamblia</name>
    <dbReference type="NCBI Taxonomy" id="5741"/>
    <lineage>
        <taxon>Eukaryota</taxon>
        <taxon>Metamonada</taxon>
        <taxon>Diplomonadida</taxon>
        <taxon>Hexamitidae</taxon>
        <taxon>Giardiinae</taxon>
        <taxon>Giardia</taxon>
    </lineage>
</organism>
<accession>Q01832</accession>
<name>C4_GIAIN</name>
<protein>
    <recommendedName>
        <fullName>Protein C4</fullName>
    </recommendedName>
</protein>
<comment type="miscellaneous">
    <text>This protein is found only in group 3 isolates.</text>
</comment>
<dbReference type="EMBL" id="M90390">
    <property type="protein sequence ID" value="AAA29156.1"/>
    <property type="molecule type" value="Genomic_DNA"/>
</dbReference>
<dbReference type="PIR" id="A49243">
    <property type="entry name" value="A49243"/>
</dbReference>
<dbReference type="VEuPathDB" id="GiardiaDB:DHA2_152568"/>
<dbReference type="VEuPathDB" id="GiardiaDB:GL50581_383"/>
<dbReference type="VEuPathDB" id="GiardiaDB:GL50803_0013747"/>
<dbReference type="VEuPathDB" id="GiardiaDB:QR46_0484"/>
<dbReference type="OrthoDB" id="10253510at2759"/>
<dbReference type="InterPro" id="IPR035226">
    <property type="entry name" value="DUF5450"/>
</dbReference>
<dbReference type="Pfam" id="PF17529">
    <property type="entry name" value="DUF5450"/>
    <property type="match status" value="1"/>
</dbReference>
<gene>
    <name type="primary">C4</name>
</gene>
<proteinExistence type="predicted"/>